<reference key="1">
    <citation type="journal article" date="2003" name="Mol. Microbiol.">
        <title>Genome-based analysis of virulence genes in a non-biofilm-forming Staphylococcus epidermidis strain (ATCC 12228).</title>
        <authorList>
            <person name="Zhang Y.-Q."/>
            <person name="Ren S.-X."/>
            <person name="Li H.-L."/>
            <person name="Wang Y.-X."/>
            <person name="Fu G."/>
            <person name="Yang J."/>
            <person name="Qin Z.-Q."/>
            <person name="Miao Y.-G."/>
            <person name="Wang W.-Y."/>
            <person name="Chen R.-S."/>
            <person name="Shen Y."/>
            <person name="Chen Z."/>
            <person name="Yuan Z.-H."/>
            <person name="Zhao G.-P."/>
            <person name="Qu D."/>
            <person name="Danchin A."/>
            <person name="Wen Y.-M."/>
        </authorList>
    </citation>
    <scope>NUCLEOTIDE SEQUENCE [LARGE SCALE GENOMIC DNA]</scope>
    <source>
        <strain>ATCC 12228 / FDA PCI 1200</strain>
    </source>
</reference>
<evidence type="ECO:0000250" key="1"/>
<evidence type="ECO:0000305" key="2"/>
<comment type="function">
    <text evidence="1">Acts as a global negative controlling element, employing Fe(2+) as a cofactor to bind the operator of the repressed genes.</text>
</comment>
<comment type="subunit">
    <text evidence="1">Homodimer.</text>
</comment>
<comment type="subcellular location">
    <subcellularLocation>
        <location evidence="1">Cytoplasm</location>
    </subcellularLocation>
</comment>
<comment type="similarity">
    <text evidence="2">Belongs to the Fur family.</text>
</comment>
<organism>
    <name type="scientific">Staphylococcus epidermidis (strain ATCC 12228 / FDA PCI 1200)</name>
    <dbReference type="NCBI Taxonomy" id="176280"/>
    <lineage>
        <taxon>Bacteria</taxon>
        <taxon>Bacillati</taxon>
        <taxon>Bacillota</taxon>
        <taxon>Bacilli</taxon>
        <taxon>Bacillales</taxon>
        <taxon>Staphylococcaceae</taxon>
        <taxon>Staphylococcus</taxon>
    </lineage>
</organism>
<sequence length="139" mass="16323">MNTNDAIKVLKENGLKYTDKRKDMLDIFVKEDKYLNAKHIQQQMDKDYPGISFDTVYRNLHLFKDLGIIESTELDGEMKFRIACTNHHHHHFICENCGETKVIDFCPIEKIKSQLPNVNIHTHKLEVYGICEECQRKAN</sequence>
<gene>
    <name type="primary">fur</name>
    <name type="ordered locus">SE_1241</name>
</gene>
<proteinExistence type="inferred from homology"/>
<accession>P0C0P4</accession>
<accession>P54204</accession>
<feature type="chain" id="PRO_0000095580" description="Ferric uptake regulation protein">
    <location>
        <begin position="1"/>
        <end position="139"/>
    </location>
</feature>
<feature type="region of interest" description="DNA-binding" evidence="1">
    <location>
        <begin position="1"/>
        <end position="85"/>
    </location>
</feature>
<feature type="region of interest" description="Dimerization" evidence="1">
    <location>
        <begin position="86"/>
        <end position="139"/>
    </location>
</feature>
<feature type="binding site" evidence="1">
    <location>
        <position position="88"/>
    </location>
    <ligand>
        <name>Fe cation</name>
        <dbReference type="ChEBI" id="CHEBI:24875"/>
    </ligand>
</feature>
<feature type="binding site" evidence="1">
    <location>
        <position position="90"/>
    </location>
    <ligand>
        <name>Fe cation</name>
        <dbReference type="ChEBI" id="CHEBI:24875"/>
    </ligand>
</feature>
<feature type="binding site" evidence="1">
    <location>
        <position position="94"/>
    </location>
    <ligand>
        <name>Zn(2+)</name>
        <dbReference type="ChEBI" id="CHEBI:29105"/>
    </ligand>
</feature>
<feature type="binding site" evidence="1">
    <location>
        <position position="97"/>
    </location>
    <ligand>
        <name>Zn(2+)</name>
        <dbReference type="ChEBI" id="CHEBI:29105"/>
    </ligand>
</feature>
<feature type="binding site" evidence="1">
    <location>
        <position position="109"/>
    </location>
    <ligand>
        <name>Fe cation</name>
        <dbReference type="ChEBI" id="CHEBI:24875"/>
    </ligand>
</feature>
<feature type="binding site" evidence="1">
    <location>
        <position position="123"/>
    </location>
    <ligand>
        <name>Fe cation</name>
        <dbReference type="ChEBI" id="CHEBI:24875"/>
    </ligand>
</feature>
<keyword id="KW-0963">Cytoplasm</keyword>
<keyword id="KW-0238">DNA-binding</keyword>
<keyword id="KW-0408">Iron</keyword>
<keyword id="KW-0479">Metal-binding</keyword>
<keyword id="KW-0678">Repressor</keyword>
<keyword id="KW-0804">Transcription</keyword>
<keyword id="KW-0805">Transcription regulation</keyword>
<keyword id="KW-0862">Zinc</keyword>
<protein>
    <recommendedName>
        <fullName>Ferric uptake regulation protein</fullName>
        <shortName>Ferric uptake regulator</shortName>
    </recommendedName>
</protein>
<name>FUR_STAES</name>
<dbReference type="EMBL" id="AE015929">
    <property type="protein sequence ID" value="AAO04840.1"/>
    <property type="molecule type" value="Genomic_DNA"/>
</dbReference>
<dbReference type="RefSeq" id="NP_764796.1">
    <property type="nucleotide sequence ID" value="NC_004461.1"/>
</dbReference>
<dbReference type="RefSeq" id="WP_001831164.1">
    <property type="nucleotide sequence ID" value="NZ_WBME01000008.1"/>
</dbReference>
<dbReference type="SMR" id="P0C0P4"/>
<dbReference type="KEGG" id="sep:SE_1241"/>
<dbReference type="PATRIC" id="fig|176280.10.peg.1209"/>
<dbReference type="eggNOG" id="COG0735">
    <property type="taxonomic scope" value="Bacteria"/>
</dbReference>
<dbReference type="HOGENOM" id="CLU_096072_5_1_9"/>
<dbReference type="OrthoDB" id="8659436at2"/>
<dbReference type="Proteomes" id="UP000001411">
    <property type="component" value="Chromosome"/>
</dbReference>
<dbReference type="GO" id="GO:0005737">
    <property type="term" value="C:cytoplasm"/>
    <property type="evidence" value="ECO:0007669"/>
    <property type="project" value="UniProtKB-SubCell"/>
</dbReference>
<dbReference type="GO" id="GO:0003700">
    <property type="term" value="F:DNA-binding transcription factor activity"/>
    <property type="evidence" value="ECO:0007669"/>
    <property type="project" value="InterPro"/>
</dbReference>
<dbReference type="GO" id="GO:0000976">
    <property type="term" value="F:transcription cis-regulatory region binding"/>
    <property type="evidence" value="ECO:0007669"/>
    <property type="project" value="TreeGrafter"/>
</dbReference>
<dbReference type="GO" id="GO:0008270">
    <property type="term" value="F:zinc ion binding"/>
    <property type="evidence" value="ECO:0007669"/>
    <property type="project" value="TreeGrafter"/>
</dbReference>
<dbReference type="GO" id="GO:0045892">
    <property type="term" value="P:negative regulation of DNA-templated transcription"/>
    <property type="evidence" value="ECO:0007669"/>
    <property type="project" value="TreeGrafter"/>
</dbReference>
<dbReference type="GO" id="GO:1900376">
    <property type="term" value="P:regulation of secondary metabolite biosynthetic process"/>
    <property type="evidence" value="ECO:0007669"/>
    <property type="project" value="TreeGrafter"/>
</dbReference>
<dbReference type="CDD" id="cd07153">
    <property type="entry name" value="Fur_like"/>
    <property type="match status" value="1"/>
</dbReference>
<dbReference type="Gene3D" id="3.30.1490.190">
    <property type="match status" value="1"/>
</dbReference>
<dbReference type="Gene3D" id="1.10.10.10">
    <property type="entry name" value="Winged helix-like DNA-binding domain superfamily/Winged helix DNA-binding domain"/>
    <property type="match status" value="1"/>
</dbReference>
<dbReference type="InterPro" id="IPR002481">
    <property type="entry name" value="FUR"/>
</dbReference>
<dbReference type="InterPro" id="IPR043135">
    <property type="entry name" value="Fur_C"/>
</dbReference>
<dbReference type="InterPro" id="IPR036388">
    <property type="entry name" value="WH-like_DNA-bd_sf"/>
</dbReference>
<dbReference type="InterPro" id="IPR036390">
    <property type="entry name" value="WH_DNA-bd_sf"/>
</dbReference>
<dbReference type="PANTHER" id="PTHR33202:SF1">
    <property type="entry name" value="FERRIC UPTAKE REGULATION PROTEIN"/>
    <property type="match status" value="1"/>
</dbReference>
<dbReference type="PANTHER" id="PTHR33202">
    <property type="entry name" value="ZINC UPTAKE REGULATION PROTEIN"/>
    <property type="match status" value="1"/>
</dbReference>
<dbReference type="Pfam" id="PF01475">
    <property type="entry name" value="FUR"/>
    <property type="match status" value="1"/>
</dbReference>
<dbReference type="SUPFAM" id="SSF46785">
    <property type="entry name" value="Winged helix' DNA-binding domain"/>
    <property type="match status" value="1"/>
</dbReference>